<organism>
    <name type="scientific">Haemophilus influenzae (strain ATCC 51907 / DSM 11121 / KW20 / Rd)</name>
    <dbReference type="NCBI Taxonomy" id="71421"/>
    <lineage>
        <taxon>Bacteria</taxon>
        <taxon>Pseudomonadati</taxon>
        <taxon>Pseudomonadota</taxon>
        <taxon>Gammaproteobacteria</taxon>
        <taxon>Pasteurellales</taxon>
        <taxon>Pasteurellaceae</taxon>
        <taxon>Haemophilus</taxon>
    </lineage>
</organism>
<reference key="1">
    <citation type="journal article" date="1995" name="Science">
        <title>Whole-genome random sequencing and assembly of Haemophilus influenzae Rd.</title>
        <authorList>
            <person name="Fleischmann R.D."/>
            <person name="Adams M.D."/>
            <person name="White O."/>
            <person name="Clayton R.A."/>
            <person name="Kirkness E.F."/>
            <person name="Kerlavage A.R."/>
            <person name="Bult C.J."/>
            <person name="Tomb J.-F."/>
            <person name="Dougherty B.A."/>
            <person name="Merrick J.M."/>
            <person name="McKenney K."/>
            <person name="Sutton G.G."/>
            <person name="FitzHugh W."/>
            <person name="Fields C.A."/>
            <person name="Gocayne J.D."/>
            <person name="Scott J.D."/>
            <person name="Shirley R."/>
            <person name="Liu L.-I."/>
            <person name="Glodek A."/>
            <person name="Kelley J.M."/>
            <person name="Weidman J.F."/>
            <person name="Phillips C.A."/>
            <person name="Spriggs T."/>
            <person name="Hedblom E."/>
            <person name="Cotton M.D."/>
            <person name="Utterback T.R."/>
            <person name="Hanna M.C."/>
            <person name="Nguyen D.T."/>
            <person name="Saudek D.M."/>
            <person name="Brandon R.C."/>
            <person name="Fine L.D."/>
            <person name="Fritchman J.L."/>
            <person name="Fuhrmann J.L."/>
            <person name="Geoghagen N.S.M."/>
            <person name="Gnehm C.L."/>
            <person name="McDonald L.A."/>
            <person name="Small K.V."/>
            <person name="Fraser C.M."/>
            <person name="Smith H.O."/>
            <person name="Venter J.C."/>
        </authorList>
    </citation>
    <scope>NUCLEOTIDE SEQUENCE [LARGE SCALE GENOMIC DNA]</scope>
    <source>
        <strain>ATCC 51907 / DSM 11121 / KW20 / Rd</strain>
    </source>
</reference>
<reference key="2">
    <citation type="submission" date="1998-05" db="EMBL/GenBank/DDBJ databases">
        <authorList>
            <person name="White O."/>
            <person name="Clayton R.A."/>
            <person name="Kerlavage A.R."/>
            <person name="Fleischmann R.D."/>
            <person name="Peterson J."/>
            <person name="Hickey E."/>
            <person name="Dodson R."/>
            <person name="Gwinn M."/>
        </authorList>
    </citation>
    <scope>SEQUENCE REVISION</scope>
</reference>
<sequence length="999" mass="114315">MTNFRLNVLAYSVMLGLTASVAYAEPTNQPTNQPTNQPTNQPTNQPTNQNSNASEQLEQINVLGSDNNNDNTPPKIAETVKTASQLKRQQVQDSRDLVRYETGVTVVEAGRFGSSGYAIRGVDENRVAITVDGLHQAETLSSQGFKELFEGYGNFNNTRNSVEIETLKVAKIAKGADSVKVGSGSLGGAVLFETKDARDFLTEKDWHIGYKAGYSTADNQGLNAVTLAGRYQMFDALIMHSKRHGHELENYDYKNGRDIQGKEREKADPYTITKESTLVKFSFSPTENHRFTVASDTYLQHSRGHDFSYNLVKTTYINKDEEELRHTNDLTKRKNVSFTYENYTVTPFWDTLKLSYSQQRITTRARTEDYCDGNEKCDSYKNPLGLQLKEGKVVDRNGDPVELKLVEDEQGQKRHQVVDKYNNPFSVASGTNNDAFVGKQLSPSEFWLDCSIFNCDKPVRVYKYQYSNQEPESKEVELNRTMEINGKKFATYESNNYRDRYHMILPNSKGYLPLDYKERDLNTKTKQINLDLTKAFTLFEIENELSYGGVYAKTTKEMVNKAGYYGRNPTWWAERTLGKSLLNGLRTCKEDSSYNGLLCPRHEPKTSFLIPVETTTKSLYFADNIKLHNMLSVDLGYRYDDIKYQPEYIPGVTPKIADDMVRELFVPLPPANGKDWQGNPVYTPEQIRKNAEENIAYIAQEKRFKKHSYSLGATFDPLNFLRVQVKYSKGFRTPTSDELYFTFKHPDFTILPNPNMKPEEAKNQEIALTFHHDWGFFSTNVFQTKYRQFIDLAYLGSRNLSNSVGGQAQARDFQVYQNVNVDRAKVKGVEINSRLNIGYFFEKLDGFNVSYKFTYQRGRLDGNRPMNAIQPKTSVIGLGYDHKEQRFGADLYVTHVSAKKAKDTYNMFYKEQGYKDSAVRWRSDDYTLVDFVTYIKPVKNVTLQFGVYNLTDRKYLTWESARSIKPFGTSNLINQGTGAGINRFYSPGRNYKLSAEITF</sequence>
<protein>
    <recommendedName>
        <fullName>Probable hemoglobin and hemoglobin-haptoglobin-binding protein 4</fullName>
    </recommendedName>
</protein>
<dbReference type="EMBL" id="L42023">
    <property type="protein sequence ID" value="AAC23213.1"/>
    <property type="status" value="ALT_SEQ"/>
    <property type="molecule type" value="Genomic_DNA"/>
</dbReference>
<dbReference type="EMBL" id="L42023">
    <property type="protein sequence ID" value="AAC23214.1"/>
    <property type="status" value="ALT_SEQ"/>
    <property type="molecule type" value="Genomic_DNA"/>
</dbReference>
<dbReference type="PIR" id="A64130">
    <property type="entry name" value="A64130"/>
</dbReference>
<dbReference type="SMR" id="Q57408"/>
<dbReference type="STRING" id="71421.HI_1567"/>
<dbReference type="EnsemblBacteria" id="AAC23213">
    <property type="protein sequence ID" value="AAC23213"/>
    <property type="gene ID" value="HI_1565"/>
</dbReference>
<dbReference type="EnsemblBacteria" id="AAC23214">
    <property type="protein sequence ID" value="AAC23214"/>
    <property type="gene ID" value="HI_1567"/>
</dbReference>
<dbReference type="KEGG" id="hin:HI_1565"/>
<dbReference type="KEGG" id="hin:HI_1567"/>
<dbReference type="eggNOG" id="COG1629">
    <property type="taxonomic scope" value="Bacteria"/>
</dbReference>
<dbReference type="eggNOG" id="COG4771">
    <property type="taxonomic scope" value="Bacteria"/>
</dbReference>
<dbReference type="HOGENOM" id="CLU_078218_0_0_6"/>
<dbReference type="PhylomeDB" id="Q57408"/>
<dbReference type="Proteomes" id="UP000000579">
    <property type="component" value="Chromosome"/>
</dbReference>
<dbReference type="GO" id="GO:0009279">
    <property type="term" value="C:cell outer membrane"/>
    <property type="evidence" value="ECO:0000318"/>
    <property type="project" value="GO_Central"/>
</dbReference>
<dbReference type="GO" id="GO:0015344">
    <property type="term" value="F:siderophore uptake transmembrane transporter activity"/>
    <property type="evidence" value="ECO:0000318"/>
    <property type="project" value="GO_Central"/>
</dbReference>
<dbReference type="GO" id="GO:0044718">
    <property type="term" value="P:siderophore transmembrane transport"/>
    <property type="evidence" value="ECO:0000318"/>
    <property type="project" value="GO_Central"/>
</dbReference>
<dbReference type="CDD" id="cd01347">
    <property type="entry name" value="ligand_gated_channel"/>
    <property type="match status" value="1"/>
</dbReference>
<dbReference type="Gene3D" id="2.40.170.20">
    <property type="entry name" value="TonB-dependent receptor, beta-barrel domain"/>
    <property type="match status" value="2"/>
</dbReference>
<dbReference type="Gene3D" id="2.170.130.10">
    <property type="entry name" value="TonB-dependent receptor, plug domain"/>
    <property type="match status" value="1"/>
</dbReference>
<dbReference type="InterPro" id="IPR012910">
    <property type="entry name" value="Plug_dom"/>
</dbReference>
<dbReference type="InterPro" id="IPR037066">
    <property type="entry name" value="Plug_dom_sf"/>
</dbReference>
<dbReference type="InterPro" id="IPR006970">
    <property type="entry name" value="PT"/>
</dbReference>
<dbReference type="InterPro" id="IPR039426">
    <property type="entry name" value="TonB-dep_rcpt-like"/>
</dbReference>
<dbReference type="InterPro" id="IPR000531">
    <property type="entry name" value="TonB-dep_rcpt_b-brl"/>
</dbReference>
<dbReference type="InterPro" id="IPR010949">
    <property type="entry name" value="TonB_Hb/transfer/lactofer_rcpt"/>
</dbReference>
<dbReference type="InterPro" id="IPR036942">
    <property type="entry name" value="TonB_rcpt_b-brl_sf"/>
</dbReference>
<dbReference type="InterPro" id="IPR010917">
    <property type="entry name" value="TonB_rcpt_CS"/>
</dbReference>
<dbReference type="NCBIfam" id="TIGR01786">
    <property type="entry name" value="TonB-hemlactrns"/>
    <property type="match status" value="1"/>
</dbReference>
<dbReference type="PANTHER" id="PTHR30069:SF29">
    <property type="entry name" value="HEMOGLOBIN AND HEMOGLOBIN-HAPTOGLOBIN-BINDING PROTEIN 1-RELATED"/>
    <property type="match status" value="1"/>
</dbReference>
<dbReference type="PANTHER" id="PTHR30069">
    <property type="entry name" value="TONB-DEPENDENT OUTER MEMBRANE RECEPTOR"/>
    <property type="match status" value="1"/>
</dbReference>
<dbReference type="Pfam" id="PF07715">
    <property type="entry name" value="Plug"/>
    <property type="match status" value="1"/>
</dbReference>
<dbReference type="Pfam" id="PF04886">
    <property type="entry name" value="PT"/>
    <property type="match status" value="1"/>
</dbReference>
<dbReference type="Pfam" id="PF00593">
    <property type="entry name" value="TonB_dep_Rec_b-barrel"/>
    <property type="match status" value="1"/>
</dbReference>
<dbReference type="SUPFAM" id="SSF56935">
    <property type="entry name" value="Porins"/>
    <property type="match status" value="1"/>
</dbReference>
<dbReference type="PROSITE" id="PS01156">
    <property type="entry name" value="TONB_DEPENDENT_REC_2"/>
    <property type="match status" value="1"/>
</dbReference>
<dbReference type="PROSITE" id="PS52016">
    <property type="entry name" value="TONB_DEPENDENT_REC_3"/>
    <property type="match status" value="1"/>
</dbReference>
<name>HGP4_HAEIN</name>
<keyword id="KW-0998">Cell outer membrane</keyword>
<keyword id="KW-0472">Membrane</keyword>
<keyword id="KW-0675">Receptor</keyword>
<keyword id="KW-1185">Reference proteome</keyword>
<keyword id="KW-0677">Repeat</keyword>
<keyword id="KW-0732">Signal</keyword>
<keyword id="KW-0798">TonB box</keyword>
<keyword id="KW-0812">Transmembrane</keyword>
<keyword id="KW-1134">Transmembrane beta strand</keyword>
<keyword id="KW-0813">Transport</keyword>
<gene>
    <name type="ordered locus">HI_1565/HI_1567</name>
</gene>
<proteinExistence type="inferred from homology"/>
<evidence type="ECO:0000250" key="1"/>
<evidence type="ECO:0000255" key="2"/>
<evidence type="ECO:0000255" key="3">
    <source>
        <dbReference type="PROSITE-ProRule" id="PRU01360"/>
    </source>
</evidence>
<evidence type="ECO:0000256" key="4">
    <source>
        <dbReference type="SAM" id="MobiDB-lite"/>
    </source>
</evidence>
<evidence type="ECO:0000305" key="5"/>
<accession>Q57408</accession>
<accession>O86244</accession>
<accession>P96344</accession>
<comment type="function">
    <text evidence="1">Acts as a receptor for hemoglobin or the hemoglobin/haptoglobin complex of the human host and is required for heme uptake.</text>
</comment>
<comment type="subcellular location">
    <subcellularLocation>
        <location evidence="3">Cell outer membrane</location>
        <topology evidence="3">Multi-pass membrane protein</topology>
    </subcellularLocation>
</comment>
<comment type="miscellaneous">
    <text evidence="1">This protein is subject to phase-variable expression associated with alteration in the length of the CCAA repeat region. This mechanism is called slipped-strand mispairing. Addition or loss of CCAA repeat units would change the reading frame and result in introduction of stop codons downstream of the repeat region. This may be a mechanism of regulation and a way to avoid the immunological response of the host (By similarity).</text>
</comment>
<comment type="similarity">
    <text evidence="5">Belongs to the TonB-dependent receptor family. Hemoglobin/haptoglobin binding protein subfamily.</text>
</comment>
<comment type="sequence caution" evidence="5">
    <conflict type="frameshift">
        <sequence resource="EMBL-CDS" id="AAC23213"/>
    </conflict>
    <text>The first frameshift is found in the repeats region.</text>
</comment>
<comment type="sequence caution" evidence="5">
    <conflict type="frameshift">
        <sequence resource="EMBL-CDS" id="AAC23214"/>
    </conflict>
    <text>The first frameshift is found in the repeats region.</text>
</comment>
<feature type="signal peptide" evidence="2">
    <location>
        <begin position="1"/>
        <end position="24"/>
    </location>
</feature>
<feature type="chain" id="PRO_0000034788" description="Probable hemoglobin and hemoglobin-haptoglobin-binding protein 4">
    <location>
        <begin position="25"/>
        <end position="999"/>
    </location>
</feature>
<feature type="repeat" description="1">
    <location>
        <begin position="26"/>
        <end position="29"/>
    </location>
</feature>
<feature type="repeat" description="2">
    <location>
        <begin position="30"/>
        <end position="33"/>
    </location>
</feature>
<feature type="repeat" description="3">
    <location>
        <begin position="34"/>
        <end position="37"/>
    </location>
</feature>
<feature type="repeat" description="4">
    <location>
        <begin position="38"/>
        <end position="41"/>
    </location>
</feature>
<feature type="repeat" description="5">
    <location>
        <begin position="42"/>
        <end position="45"/>
    </location>
</feature>
<feature type="repeat" description="6">
    <location>
        <begin position="46"/>
        <end position="49"/>
    </location>
</feature>
<feature type="domain" description="TBDR plug" evidence="3">
    <location>
        <begin position="68"/>
        <end position="195"/>
    </location>
</feature>
<feature type="domain" description="TBDR beta-barrel" evidence="3">
    <location>
        <begin position="203"/>
        <end position="999"/>
    </location>
</feature>
<feature type="region of interest" description="Disordered" evidence="4">
    <location>
        <begin position="25"/>
        <end position="52"/>
    </location>
</feature>
<feature type="region of interest" description="6 X 4 AA tandem repeats of P-T-N-Q">
    <location>
        <begin position="26"/>
        <end position="49"/>
    </location>
</feature>
<feature type="short sequence motif" description="TonB box">
    <location>
        <begin position="58"/>
        <end position="65"/>
    </location>
</feature>
<feature type="short sequence motif" description="TonB C-terminal box">
    <location>
        <begin position="982"/>
        <end position="999"/>
    </location>
</feature>
<feature type="compositionally biased region" description="Low complexity" evidence="4">
    <location>
        <begin position="26"/>
        <end position="50"/>
    </location>
</feature>